<reference key="1">
    <citation type="submission" date="2007-06" db="EMBL/GenBank/DDBJ databases">
        <title>Complete sequence of Methanococcus vannielii SB.</title>
        <authorList>
            <consortium name="US DOE Joint Genome Institute"/>
            <person name="Copeland A."/>
            <person name="Lucas S."/>
            <person name="Lapidus A."/>
            <person name="Barry K."/>
            <person name="Glavina del Rio T."/>
            <person name="Dalin E."/>
            <person name="Tice H."/>
            <person name="Pitluck S."/>
            <person name="Chain P."/>
            <person name="Malfatti S."/>
            <person name="Shin M."/>
            <person name="Vergez L."/>
            <person name="Schmutz J."/>
            <person name="Larimer F."/>
            <person name="Land M."/>
            <person name="Hauser L."/>
            <person name="Kyrpides N."/>
            <person name="Anderson I."/>
            <person name="Sieprawska-Lupa M."/>
            <person name="Whitman W.B."/>
            <person name="Richardson P."/>
        </authorList>
    </citation>
    <scope>NUCLEOTIDE SEQUENCE [LARGE SCALE GENOMIC DNA]</scope>
    <source>
        <strain>ATCC 35089 / DSM 1224 / JCM 13029 / OCM 148 / SB</strain>
    </source>
</reference>
<keyword id="KW-0030">Aminoacyl-tRNA synthetase</keyword>
<keyword id="KW-0067">ATP-binding</keyword>
<keyword id="KW-0963">Cytoplasm</keyword>
<keyword id="KW-0436">Ligase</keyword>
<keyword id="KW-0547">Nucleotide-binding</keyword>
<keyword id="KW-0648">Protein biosynthesis</keyword>
<protein>
    <recommendedName>
        <fullName evidence="1">Glycine--tRNA ligase</fullName>
        <ecNumber evidence="1">6.1.1.14</ecNumber>
    </recommendedName>
    <alternativeName>
        <fullName evidence="1">Glycyl-tRNA synthetase</fullName>
        <shortName evidence="1">GlyRS</shortName>
    </alternativeName>
</protein>
<gene>
    <name evidence="1" type="primary">glyS</name>
    <name type="ordered locus">Mevan_1227</name>
</gene>
<organism>
    <name type="scientific">Methanococcus vannielii (strain ATCC 35089 / DSM 1224 / JCM 13029 / OCM 148 / SB)</name>
    <dbReference type="NCBI Taxonomy" id="406327"/>
    <lineage>
        <taxon>Archaea</taxon>
        <taxon>Methanobacteriati</taxon>
        <taxon>Methanobacteriota</taxon>
        <taxon>Methanomada group</taxon>
        <taxon>Methanococci</taxon>
        <taxon>Methanococcales</taxon>
        <taxon>Methanococcaceae</taxon>
        <taxon>Methanococcus</taxon>
    </lineage>
</organism>
<feature type="chain" id="PRO_1000047380" description="Glycine--tRNA ligase">
    <location>
        <begin position="1"/>
        <end position="574"/>
    </location>
</feature>
<feature type="binding site" evidence="1">
    <location>
        <position position="96"/>
    </location>
    <ligand>
        <name>substrate</name>
    </ligand>
</feature>
<feature type="binding site" evidence="1">
    <location>
        <position position="162"/>
    </location>
    <ligand>
        <name>substrate</name>
    </ligand>
</feature>
<feature type="binding site" evidence="1">
    <location>
        <begin position="194"/>
        <end position="196"/>
    </location>
    <ligand>
        <name>ATP</name>
        <dbReference type="ChEBI" id="CHEBI:30616"/>
    </ligand>
</feature>
<feature type="binding site" evidence="1">
    <location>
        <begin position="204"/>
        <end position="209"/>
    </location>
    <ligand>
        <name>ATP</name>
        <dbReference type="ChEBI" id="CHEBI:30616"/>
    </ligand>
</feature>
<feature type="binding site" evidence="1">
    <location>
        <begin position="209"/>
        <end position="213"/>
    </location>
    <ligand>
        <name>substrate</name>
    </ligand>
</feature>
<feature type="binding site" evidence="1">
    <location>
        <begin position="327"/>
        <end position="328"/>
    </location>
    <ligand>
        <name>ATP</name>
        <dbReference type="ChEBI" id="CHEBI:30616"/>
    </ligand>
</feature>
<feature type="binding site" evidence="1">
    <location>
        <begin position="446"/>
        <end position="450"/>
    </location>
    <ligand>
        <name>substrate</name>
    </ligand>
</feature>
<feature type="binding site" evidence="1">
    <location>
        <begin position="450"/>
        <end position="453"/>
    </location>
    <ligand>
        <name>ATP</name>
        <dbReference type="ChEBI" id="CHEBI:30616"/>
    </ligand>
</feature>
<proteinExistence type="inferred from homology"/>
<evidence type="ECO:0000255" key="1">
    <source>
        <dbReference type="HAMAP-Rule" id="MF_00253"/>
    </source>
</evidence>
<dbReference type="EC" id="6.1.1.14" evidence="1"/>
<dbReference type="EMBL" id="CP000742">
    <property type="protein sequence ID" value="ABR55125.1"/>
    <property type="molecule type" value="Genomic_DNA"/>
</dbReference>
<dbReference type="RefSeq" id="WP_012066040.1">
    <property type="nucleotide sequence ID" value="NC_009634.1"/>
</dbReference>
<dbReference type="SMR" id="A6URK3"/>
<dbReference type="STRING" id="406327.Mevan_1227"/>
<dbReference type="GeneID" id="5325856"/>
<dbReference type="KEGG" id="mvn:Mevan_1227"/>
<dbReference type="eggNOG" id="arCOG00405">
    <property type="taxonomic scope" value="Archaea"/>
</dbReference>
<dbReference type="HOGENOM" id="CLU_015515_1_2_2"/>
<dbReference type="OrthoDB" id="6113at2157"/>
<dbReference type="Proteomes" id="UP000001107">
    <property type="component" value="Chromosome"/>
</dbReference>
<dbReference type="GO" id="GO:0005737">
    <property type="term" value="C:cytoplasm"/>
    <property type="evidence" value="ECO:0007669"/>
    <property type="project" value="UniProtKB-SubCell"/>
</dbReference>
<dbReference type="GO" id="GO:0005524">
    <property type="term" value="F:ATP binding"/>
    <property type="evidence" value="ECO:0007669"/>
    <property type="project" value="UniProtKB-UniRule"/>
</dbReference>
<dbReference type="GO" id="GO:0004820">
    <property type="term" value="F:glycine-tRNA ligase activity"/>
    <property type="evidence" value="ECO:0000250"/>
    <property type="project" value="UniProtKB"/>
</dbReference>
<dbReference type="GO" id="GO:0046983">
    <property type="term" value="F:protein dimerization activity"/>
    <property type="evidence" value="ECO:0000250"/>
    <property type="project" value="UniProtKB"/>
</dbReference>
<dbReference type="GO" id="GO:0006426">
    <property type="term" value="P:glycyl-tRNA aminoacylation"/>
    <property type="evidence" value="ECO:0007669"/>
    <property type="project" value="UniProtKB-UniRule"/>
</dbReference>
<dbReference type="CDD" id="cd00774">
    <property type="entry name" value="GlyRS-like_core"/>
    <property type="match status" value="1"/>
</dbReference>
<dbReference type="CDD" id="cd00858">
    <property type="entry name" value="GlyRS_anticodon"/>
    <property type="match status" value="1"/>
</dbReference>
<dbReference type="FunFam" id="3.30.40.230:FF:000005">
    <property type="entry name" value="Glycine--tRNA ligase"/>
    <property type="match status" value="1"/>
</dbReference>
<dbReference type="FunFam" id="3.40.50.800:FF:000002">
    <property type="entry name" value="Glycine--tRNA ligase"/>
    <property type="match status" value="1"/>
</dbReference>
<dbReference type="FunFam" id="3.30.720.200:FF:000001">
    <property type="entry name" value="Glycine--tRNA ligase 2"/>
    <property type="match status" value="1"/>
</dbReference>
<dbReference type="Gene3D" id="3.30.40.230">
    <property type="match status" value="1"/>
</dbReference>
<dbReference type="Gene3D" id="3.30.720.200">
    <property type="match status" value="1"/>
</dbReference>
<dbReference type="Gene3D" id="3.40.50.800">
    <property type="entry name" value="Anticodon-binding domain"/>
    <property type="match status" value="1"/>
</dbReference>
<dbReference type="Gene3D" id="3.30.930.10">
    <property type="entry name" value="Bira Bifunctional Protein, Domain 2"/>
    <property type="match status" value="1"/>
</dbReference>
<dbReference type="HAMAP" id="MF_00253_A">
    <property type="entry name" value="Gly_tRNA_synth_A"/>
    <property type="match status" value="1"/>
</dbReference>
<dbReference type="InterPro" id="IPR002314">
    <property type="entry name" value="aa-tRNA-synt_IIb"/>
</dbReference>
<dbReference type="InterPro" id="IPR006195">
    <property type="entry name" value="aa-tRNA-synth_II"/>
</dbReference>
<dbReference type="InterPro" id="IPR045864">
    <property type="entry name" value="aa-tRNA-synth_II/BPL/LPL"/>
</dbReference>
<dbReference type="InterPro" id="IPR004154">
    <property type="entry name" value="Anticodon-bd"/>
</dbReference>
<dbReference type="InterPro" id="IPR036621">
    <property type="entry name" value="Anticodon-bd_dom_sf"/>
</dbReference>
<dbReference type="InterPro" id="IPR027031">
    <property type="entry name" value="Gly-tRNA_synthase/POLG2"/>
</dbReference>
<dbReference type="InterPro" id="IPR022960">
    <property type="entry name" value="Gly_tRNA_ligase_arc"/>
</dbReference>
<dbReference type="InterPro" id="IPR033731">
    <property type="entry name" value="GlyRS-like_core"/>
</dbReference>
<dbReference type="InterPro" id="IPR002315">
    <property type="entry name" value="tRNA-synt_gly"/>
</dbReference>
<dbReference type="NCBIfam" id="TIGR00389">
    <property type="entry name" value="glyS_dimeric"/>
    <property type="match status" value="1"/>
</dbReference>
<dbReference type="NCBIfam" id="NF003211">
    <property type="entry name" value="PRK04173.1"/>
    <property type="match status" value="1"/>
</dbReference>
<dbReference type="PANTHER" id="PTHR10745:SF0">
    <property type="entry name" value="GLYCINE--TRNA LIGASE"/>
    <property type="match status" value="1"/>
</dbReference>
<dbReference type="PANTHER" id="PTHR10745">
    <property type="entry name" value="GLYCYL-TRNA SYNTHETASE/DNA POLYMERASE SUBUNIT GAMMA-2"/>
    <property type="match status" value="1"/>
</dbReference>
<dbReference type="Pfam" id="PF03129">
    <property type="entry name" value="HGTP_anticodon"/>
    <property type="match status" value="1"/>
</dbReference>
<dbReference type="Pfam" id="PF00587">
    <property type="entry name" value="tRNA-synt_2b"/>
    <property type="match status" value="1"/>
</dbReference>
<dbReference type="PRINTS" id="PR01043">
    <property type="entry name" value="TRNASYNTHGLY"/>
</dbReference>
<dbReference type="SUPFAM" id="SSF52954">
    <property type="entry name" value="Class II aaRS ABD-related"/>
    <property type="match status" value="1"/>
</dbReference>
<dbReference type="SUPFAM" id="SSF55681">
    <property type="entry name" value="Class II aaRS and biotin synthetases"/>
    <property type="match status" value="1"/>
</dbReference>
<dbReference type="PROSITE" id="PS50862">
    <property type="entry name" value="AA_TRNA_LIGASE_II"/>
    <property type="match status" value="1"/>
</dbReference>
<name>SYG_METVS</name>
<accession>A6URK3</accession>
<sequence length="574" mass="66173">MDKYDKIIDLTKRRGFLWNSFEIYGGIAGFFDYGPLGAILKSSVINTWRKHYIINEGFYEIDSPTVNPYEVLKASGHVENFTDPLVECKSCLESFRADHIIEENIEVDTEGKTLNELQEMIEKNNIKCPKCGGEFKEVNTFNLMFATSIGPGGKRAAFMRPETAQGIFIQFKRISQFFRNKLPYGAVQIGKAYRNEISPRQGVIRLREFTQAEAEFFIDSRKKENFEKFESVKDLILPLLPGKNQENESLSSEEKIVRMSLGDAVKNKIIAHEAIAYYIAVTKKFLMDIGIDETKLRFRQHLPNEMAHYAADCWDAELYTDRYGWIECVGIADRTDYDLRAHMKNSGEDLSVFVEFDESKEIEVYEIELNYKLVGKTFKGDAKILEESLKELSNDKMEELIKTLKNNEKYILKTCKRDFEVLNEYLTVKKVKKNVTGEKIVPHVIEPSYGIDRITYCVIEHAFKEEDDRTLLAFVNTVSPVKVGVFPLVNKEGMDEIAENLKNKFRKNGIIAEYDDSGAIGRRYMRMDEIGTPFCVTVDGETLKDNTVTIRERDSREQFRIPLDGVVDYIKEKL</sequence>
<comment type="function">
    <text evidence="1">Catalyzes the attachment of glycine to tRNA(Gly).</text>
</comment>
<comment type="catalytic activity">
    <reaction evidence="1">
        <text>tRNA(Gly) + glycine + ATP = glycyl-tRNA(Gly) + AMP + diphosphate</text>
        <dbReference type="Rhea" id="RHEA:16013"/>
        <dbReference type="Rhea" id="RHEA-COMP:9664"/>
        <dbReference type="Rhea" id="RHEA-COMP:9683"/>
        <dbReference type="ChEBI" id="CHEBI:30616"/>
        <dbReference type="ChEBI" id="CHEBI:33019"/>
        <dbReference type="ChEBI" id="CHEBI:57305"/>
        <dbReference type="ChEBI" id="CHEBI:78442"/>
        <dbReference type="ChEBI" id="CHEBI:78522"/>
        <dbReference type="ChEBI" id="CHEBI:456215"/>
        <dbReference type="EC" id="6.1.1.14"/>
    </reaction>
</comment>
<comment type="subcellular location">
    <subcellularLocation>
        <location>Cytoplasm</location>
    </subcellularLocation>
</comment>
<comment type="similarity">
    <text evidence="1">Belongs to the class-II aminoacyl-tRNA synthetase family.</text>
</comment>